<protein>
    <recommendedName>
        <fullName evidence="1">Glutamate 5-kinase</fullName>
        <ecNumber evidence="1">2.7.2.11</ecNumber>
    </recommendedName>
    <alternativeName>
        <fullName evidence="1">Gamma-glutamyl kinase</fullName>
        <shortName evidence="1">GK</shortName>
    </alternativeName>
</protein>
<keyword id="KW-0028">Amino-acid biosynthesis</keyword>
<keyword id="KW-0067">ATP-binding</keyword>
<keyword id="KW-0963">Cytoplasm</keyword>
<keyword id="KW-0418">Kinase</keyword>
<keyword id="KW-0547">Nucleotide-binding</keyword>
<keyword id="KW-0641">Proline biosynthesis</keyword>
<keyword id="KW-0808">Transferase</keyword>
<accession>Q2P2G0</accession>
<dbReference type="EC" id="2.7.2.11" evidence="1"/>
<dbReference type="EMBL" id="AP008229">
    <property type="protein sequence ID" value="BAE69267.1"/>
    <property type="molecule type" value="Genomic_DNA"/>
</dbReference>
<dbReference type="SMR" id="Q2P2G0"/>
<dbReference type="KEGG" id="xom:XOO2512"/>
<dbReference type="HOGENOM" id="CLU_025400_2_0_6"/>
<dbReference type="UniPathway" id="UPA00098">
    <property type="reaction ID" value="UER00359"/>
</dbReference>
<dbReference type="GO" id="GO:0005829">
    <property type="term" value="C:cytosol"/>
    <property type="evidence" value="ECO:0007669"/>
    <property type="project" value="TreeGrafter"/>
</dbReference>
<dbReference type="GO" id="GO:0005524">
    <property type="term" value="F:ATP binding"/>
    <property type="evidence" value="ECO:0007669"/>
    <property type="project" value="UniProtKB-KW"/>
</dbReference>
<dbReference type="GO" id="GO:0004349">
    <property type="term" value="F:glutamate 5-kinase activity"/>
    <property type="evidence" value="ECO:0007669"/>
    <property type="project" value="UniProtKB-UniRule"/>
</dbReference>
<dbReference type="GO" id="GO:0003723">
    <property type="term" value="F:RNA binding"/>
    <property type="evidence" value="ECO:0007669"/>
    <property type="project" value="InterPro"/>
</dbReference>
<dbReference type="GO" id="GO:0055129">
    <property type="term" value="P:L-proline biosynthetic process"/>
    <property type="evidence" value="ECO:0007669"/>
    <property type="project" value="UniProtKB-UniRule"/>
</dbReference>
<dbReference type="CDD" id="cd04242">
    <property type="entry name" value="AAK_G5K_ProB"/>
    <property type="match status" value="1"/>
</dbReference>
<dbReference type="CDD" id="cd21157">
    <property type="entry name" value="PUA_G5K"/>
    <property type="match status" value="1"/>
</dbReference>
<dbReference type="FunFam" id="2.30.130.10:FF:000007">
    <property type="entry name" value="Glutamate 5-kinase"/>
    <property type="match status" value="1"/>
</dbReference>
<dbReference type="FunFam" id="3.40.1160.10:FF:000018">
    <property type="entry name" value="Glutamate 5-kinase"/>
    <property type="match status" value="1"/>
</dbReference>
<dbReference type="Gene3D" id="3.40.1160.10">
    <property type="entry name" value="Acetylglutamate kinase-like"/>
    <property type="match status" value="1"/>
</dbReference>
<dbReference type="Gene3D" id="2.30.130.10">
    <property type="entry name" value="PUA domain"/>
    <property type="match status" value="1"/>
</dbReference>
<dbReference type="HAMAP" id="MF_00456">
    <property type="entry name" value="ProB"/>
    <property type="match status" value="1"/>
</dbReference>
<dbReference type="InterPro" id="IPR036393">
    <property type="entry name" value="AceGlu_kinase-like_sf"/>
</dbReference>
<dbReference type="InterPro" id="IPR001048">
    <property type="entry name" value="Asp/Glu/Uridylate_kinase"/>
</dbReference>
<dbReference type="InterPro" id="IPR041739">
    <property type="entry name" value="G5K_ProB"/>
</dbReference>
<dbReference type="InterPro" id="IPR001057">
    <property type="entry name" value="Glu/AcGlu_kinase"/>
</dbReference>
<dbReference type="InterPro" id="IPR011529">
    <property type="entry name" value="Glu_5kinase"/>
</dbReference>
<dbReference type="InterPro" id="IPR005715">
    <property type="entry name" value="Glu_5kinase/COase_Synthase"/>
</dbReference>
<dbReference type="InterPro" id="IPR019797">
    <property type="entry name" value="Glutamate_5-kinase_CS"/>
</dbReference>
<dbReference type="InterPro" id="IPR002478">
    <property type="entry name" value="PUA"/>
</dbReference>
<dbReference type="InterPro" id="IPR015947">
    <property type="entry name" value="PUA-like_sf"/>
</dbReference>
<dbReference type="InterPro" id="IPR036974">
    <property type="entry name" value="PUA_sf"/>
</dbReference>
<dbReference type="NCBIfam" id="TIGR01027">
    <property type="entry name" value="proB"/>
    <property type="match status" value="1"/>
</dbReference>
<dbReference type="PANTHER" id="PTHR43654">
    <property type="entry name" value="GLUTAMATE 5-KINASE"/>
    <property type="match status" value="1"/>
</dbReference>
<dbReference type="PANTHER" id="PTHR43654:SF1">
    <property type="entry name" value="ISOPENTENYL PHOSPHATE KINASE"/>
    <property type="match status" value="1"/>
</dbReference>
<dbReference type="Pfam" id="PF00696">
    <property type="entry name" value="AA_kinase"/>
    <property type="match status" value="1"/>
</dbReference>
<dbReference type="Pfam" id="PF01472">
    <property type="entry name" value="PUA"/>
    <property type="match status" value="1"/>
</dbReference>
<dbReference type="PIRSF" id="PIRSF000729">
    <property type="entry name" value="GK"/>
    <property type="match status" value="1"/>
</dbReference>
<dbReference type="PRINTS" id="PR00474">
    <property type="entry name" value="GLU5KINASE"/>
</dbReference>
<dbReference type="SMART" id="SM00359">
    <property type="entry name" value="PUA"/>
    <property type="match status" value="1"/>
</dbReference>
<dbReference type="SUPFAM" id="SSF53633">
    <property type="entry name" value="Carbamate kinase-like"/>
    <property type="match status" value="1"/>
</dbReference>
<dbReference type="SUPFAM" id="SSF88697">
    <property type="entry name" value="PUA domain-like"/>
    <property type="match status" value="1"/>
</dbReference>
<dbReference type="PROSITE" id="PS00902">
    <property type="entry name" value="GLUTAMATE_5_KINASE"/>
    <property type="match status" value="1"/>
</dbReference>
<dbReference type="PROSITE" id="PS50890">
    <property type="entry name" value="PUA"/>
    <property type="match status" value="1"/>
</dbReference>
<organism>
    <name type="scientific">Xanthomonas oryzae pv. oryzae (strain MAFF 311018)</name>
    <dbReference type="NCBI Taxonomy" id="342109"/>
    <lineage>
        <taxon>Bacteria</taxon>
        <taxon>Pseudomonadati</taxon>
        <taxon>Pseudomonadota</taxon>
        <taxon>Gammaproteobacteria</taxon>
        <taxon>Lysobacterales</taxon>
        <taxon>Lysobacteraceae</taxon>
        <taxon>Xanthomonas</taxon>
    </lineage>
</organism>
<name>PROB_XANOM</name>
<proteinExistence type="inferred from homology"/>
<evidence type="ECO:0000255" key="1">
    <source>
        <dbReference type="HAMAP-Rule" id="MF_00456"/>
    </source>
</evidence>
<comment type="function">
    <text evidence="1">Catalyzes the transfer of a phosphate group to glutamate to form L-glutamate 5-phosphate.</text>
</comment>
<comment type="catalytic activity">
    <reaction evidence="1">
        <text>L-glutamate + ATP = L-glutamyl 5-phosphate + ADP</text>
        <dbReference type="Rhea" id="RHEA:14877"/>
        <dbReference type="ChEBI" id="CHEBI:29985"/>
        <dbReference type="ChEBI" id="CHEBI:30616"/>
        <dbReference type="ChEBI" id="CHEBI:58274"/>
        <dbReference type="ChEBI" id="CHEBI:456216"/>
        <dbReference type="EC" id="2.7.2.11"/>
    </reaction>
</comment>
<comment type="pathway">
    <text evidence="1">Amino-acid biosynthesis; L-proline biosynthesis; L-glutamate 5-semialdehyde from L-glutamate: step 1/2.</text>
</comment>
<comment type="subcellular location">
    <subcellularLocation>
        <location evidence="1">Cytoplasm</location>
    </subcellularLocation>
</comment>
<comment type="similarity">
    <text evidence="1">Belongs to the glutamate 5-kinase family.</text>
</comment>
<gene>
    <name evidence="1" type="primary">proB</name>
    <name type="ordered locus">XOO2512</name>
</gene>
<sequence>MLKVGSSLLAADGGGLSPRFALGLAQFVSANLAAGRELVIVSSGAVAAGRAILPKAVDVGAPIAARQALAALGQAQLIALWQRFFERAVAQVLLTHDDLRNRRRYLNARATLGELLRLGALPVINENDTVSVDELKLGDNDNLAAIVAALVDADALFIATDIDGLYSADPRSNPLARPLDDVPELTPEVLAMAGGSGSNVGTGGMRTKLEAAAKAGAAGIETYLFNGRSGEVVRALAQDRLRGTRIHAARTRIAARKYWLRHAPVEAGAILVDAGAAMALSDKGASLLPGGVVGAEGDFRRGDMVEIRLRDDEGERCLARGVSQYSAVDIRRIARRHSRDIENVLGYSYGENVVHRDDLVLL</sequence>
<feature type="chain" id="PRO_0000230075" description="Glutamate 5-kinase">
    <location>
        <begin position="1"/>
        <end position="362"/>
    </location>
</feature>
<feature type="domain" description="PUA" evidence="1">
    <location>
        <begin position="267"/>
        <end position="348"/>
    </location>
</feature>
<feature type="binding site" evidence="1">
    <location>
        <position position="3"/>
    </location>
    <ligand>
        <name>ATP</name>
        <dbReference type="ChEBI" id="CHEBI:30616"/>
    </ligand>
</feature>
<feature type="binding site" evidence="1">
    <location>
        <position position="43"/>
    </location>
    <ligand>
        <name>substrate</name>
    </ligand>
</feature>
<feature type="binding site" evidence="1">
    <location>
        <position position="128"/>
    </location>
    <ligand>
        <name>substrate</name>
    </ligand>
</feature>
<feature type="binding site" evidence="1">
    <location>
        <position position="140"/>
    </location>
    <ligand>
        <name>substrate</name>
    </ligand>
</feature>
<feature type="binding site" evidence="1">
    <location>
        <begin position="160"/>
        <end position="161"/>
    </location>
    <ligand>
        <name>ATP</name>
        <dbReference type="ChEBI" id="CHEBI:30616"/>
    </ligand>
</feature>
<feature type="binding site" evidence="1">
    <location>
        <begin position="202"/>
        <end position="208"/>
    </location>
    <ligand>
        <name>ATP</name>
        <dbReference type="ChEBI" id="CHEBI:30616"/>
    </ligand>
</feature>
<reference key="1">
    <citation type="journal article" date="2005" name="Jpn. Agric. Res. Q.">
        <title>Genome sequence of Xanthomonas oryzae pv. oryzae suggests contribution of large numbers of effector genes and insertion sequences to its race diversity.</title>
        <authorList>
            <person name="Ochiai H."/>
            <person name="Inoue Y."/>
            <person name="Takeya M."/>
            <person name="Sasaki A."/>
            <person name="Kaku H."/>
        </authorList>
    </citation>
    <scope>NUCLEOTIDE SEQUENCE [LARGE SCALE GENOMIC DNA]</scope>
    <source>
        <strain>MAFF 311018</strain>
    </source>
</reference>